<evidence type="ECO:0000255" key="1">
    <source>
        <dbReference type="HAMAP-Rule" id="MF_00086"/>
    </source>
</evidence>
<comment type="function">
    <text evidence="1">Catalyzes the formation of S-adenosylmethionine (AdoMet) from methionine and ATP. The overall synthetic reaction is composed of two sequential steps, AdoMet formation and the subsequent tripolyphosphate hydrolysis which occurs prior to release of AdoMet from the enzyme.</text>
</comment>
<comment type="catalytic activity">
    <reaction evidence="1">
        <text>L-methionine + ATP + H2O = S-adenosyl-L-methionine + phosphate + diphosphate</text>
        <dbReference type="Rhea" id="RHEA:21080"/>
        <dbReference type="ChEBI" id="CHEBI:15377"/>
        <dbReference type="ChEBI" id="CHEBI:30616"/>
        <dbReference type="ChEBI" id="CHEBI:33019"/>
        <dbReference type="ChEBI" id="CHEBI:43474"/>
        <dbReference type="ChEBI" id="CHEBI:57844"/>
        <dbReference type="ChEBI" id="CHEBI:59789"/>
        <dbReference type="EC" id="2.5.1.6"/>
    </reaction>
</comment>
<comment type="cofactor">
    <cofactor evidence="1">
        <name>Mg(2+)</name>
        <dbReference type="ChEBI" id="CHEBI:18420"/>
    </cofactor>
    <text evidence="1">Binds 2 divalent ions per subunit.</text>
</comment>
<comment type="cofactor">
    <cofactor evidence="1">
        <name>K(+)</name>
        <dbReference type="ChEBI" id="CHEBI:29103"/>
    </cofactor>
    <text evidence="1">Binds 1 potassium ion per subunit.</text>
</comment>
<comment type="pathway">
    <text evidence="1">Amino-acid biosynthesis; S-adenosyl-L-methionine biosynthesis; S-adenosyl-L-methionine from L-methionine: step 1/1.</text>
</comment>
<comment type="subunit">
    <text evidence="1">Homotetramer; dimer of dimers.</text>
</comment>
<comment type="subcellular location">
    <subcellularLocation>
        <location evidence="1">Cytoplasm</location>
    </subcellularLocation>
</comment>
<comment type="similarity">
    <text evidence="1">Belongs to the AdoMet synthase family.</text>
</comment>
<keyword id="KW-0067">ATP-binding</keyword>
<keyword id="KW-0963">Cytoplasm</keyword>
<keyword id="KW-0460">Magnesium</keyword>
<keyword id="KW-0479">Metal-binding</keyword>
<keyword id="KW-0547">Nucleotide-binding</keyword>
<keyword id="KW-0554">One-carbon metabolism</keyword>
<keyword id="KW-0630">Potassium</keyword>
<keyword id="KW-0808">Transferase</keyword>
<gene>
    <name evidence="1" type="primary">metK</name>
    <name type="ordered locus">YPK_0843</name>
</gene>
<organism>
    <name type="scientific">Yersinia pseudotuberculosis serotype O:3 (strain YPIII)</name>
    <dbReference type="NCBI Taxonomy" id="502800"/>
    <lineage>
        <taxon>Bacteria</taxon>
        <taxon>Pseudomonadati</taxon>
        <taxon>Pseudomonadota</taxon>
        <taxon>Gammaproteobacteria</taxon>
        <taxon>Enterobacterales</taxon>
        <taxon>Yersiniaceae</taxon>
        <taxon>Yersinia</taxon>
    </lineage>
</organism>
<name>METK_YERPY</name>
<reference key="1">
    <citation type="submission" date="2008-02" db="EMBL/GenBank/DDBJ databases">
        <title>Complete sequence of Yersinia pseudotuberculosis YPIII.</title>
        <authorList>
            <consortium name="US DOE Joint Genome Institute"/>
            <person name="Copeland A."/>
            <person name="Lucas S."/>
            <person name="Lapidus A."/>
            <person name="Glavina del Rio T."/>
            <person name="Dalin E."/>
            <person name="Tice H."/>
            <person name="Bruce D."/>
            <person name="Goodwin L."/>
            <person name="Pitluck S."/>
            <person name="Munk A.C."/>
            <person name="Brettin T."/>
            <person name="Detter J.C."/>
            <person name="Han C."/>
            <person name="Tapia R."/>
            <person name="Schmutz J."/>
            <person name="Larimer F."/>
            <person name="Land M."/>
            <person name="Hauser L."/>
            <person name="Challacombe J.F."/>
            <person name="Green L."/>
            <person name="Lindler L.E."/>
            <person name="Nikolich M.P."/>
            <person name="Richardson P."/>
        </authorList>
    </citation>
    <scope>NUCLEOTIDE SEQUENCE [LARGE SCALE GENOMIC DNA]</scope>
    <source>
        <strain>YPIII</strain>
    </source>
</reference>
<protein>
    <recommendedName>
        <fullName evidence="1">S-adenosylmethionine synthase</fullName>
        <shortName evidence="1">AdoMet synthase</shortName>
        <ecNumber evidence="1">2.5.1.6</ecNumber>
    </recommendedName>
    <alternativeName>
        <fullName evidence="1">MAT</fullName>
    </alternativeName>
    <alternativeName>
        <fullName evidence="1">Methionine adenosyltransferase</fullName>
    </alternativeName>
</protein>
<feature type="chain" id="PRO_1000093106" description="S-adenosylmethionine synthase">
    <location>
        <begin position="1"/>
        <end position="384"/>
    </location>
</feature>
<feature type="region of interest" description="Flexible loop" evidence="1">
    <location>
        <begin position="99"/>
        <end position="109"/>
    </location>
</feature>
<feature type="binding site" description="in other chain" evidence="1">
    <location>
        <position position="15"/>
    </location>
    <ligand>
        <name>ATP</name>
        <dbReference type="ChEBI" id="CHEBI:30616"/>
        <note>ligand shared between two neighboring subunits</note>
    </ligand>
</feature>
<feature type="binding site" evidence="1">
    <location>
        <position position="17"/>
    </location>
    <ligand>
        <name>Mg(2+)</name>
        <dbReference type="ChEBI" id="CHEBI:18420"/>
    </ligand>
</feature>
<feature type="binding site" evidence="1">
    <location>
        <position position="43"/>
    </location>
    <ligand>
        <name>K(+)</name>
        <dbReference type="ChEBI" id="CHEBI:29103"/>
    </ligand>
</feature>
<feature type="binding site" description="in other chain" evidence="1">
    <location>
        <position position="56"/>
    </location>
    <ligand>
        <name>L-methionine</name>
        <dbReference type="ChEBI" id="CHEBI:57844"/>
        <note>ligand shared between two neighboring subunits</note>
    </ligand>
</feature>
<feature type="binding site" description="in other chain" evidence="1">
    <location>
        <position position="99"/>
    </location>
    <ligand>
        <name>L-methionine</name>
        <dbReference type="ChEBI" id="CHEBI:57844"/>
        <note>ligand shared between two neighboring subunits</note>
    </ligand>
</feature>
<feature type="binding site" description="in other chain" evidence="1">
    <location>
        <begin position="164"/>
        <end position="166"/>
    </location>
    <ligand>
        <name>ATP</name>
        <dbReference type="ChEBI" id="CHEBI:30616"/>
        <note>ligand shared between two neighboring subunits</note>
    </ligand>
</feature>
<feature type="binding site" description="in other chain" evidence="1">
    <location>
        <begin position="230"/>
        <end position="231"/>
    </location>
    <ligand>
        <name>ATP</name>
        <dbReference type="ChEBI" id="CHEBI:30616"/>
        <note>ligand shared between two neighboring subunits</note>
    </ligand>
</feature>
<feature type="binding site" evidence="1">
    <location>
        <position position="239"/>
    </location>
    <ligand>
        <name>ATP</name>
        <dbReference type="ChEBI" id="CHEBI:30616"/>
        <note>ligand shared between two neighboring subunits</note>
    </ligand>
</feature>
<feature type="binding site" evidence="1">
    <location>
        <position position="239"/>
    </location>
    <ligand>
        <name>L-methionine</name>
        <dbReference type="ChEBI" id="CHEBI:57844"/>
        <note>ligand shared between two neighboring subunits</note>
    </ligand>
</feature>
<feature type="binding site" description="in other chain" evidence="1">
    <location>
        <begin position="245"/>
        <end position="246"/>
    </location>
    <ligand>
        <name>ATP</name>
        <dbReference type="ChEBI" id="CHEBI:30616"/>
        <note>ligand shared between two neighboring subunits</note>
    </ligand>
</feature>
<feature type="binding site" evidence="1">
    <location>
        <position position="262"/>
    </location>
    <ligand>
        <name>ATP</name>
        <dbReference type="ChEBI" id="CHEBI:30616"/>
        <note>ligand shared between two neighboring subunits</note>
    </ligand>
</feature>
<feature type="binding site" evidence="1">
    <location>
        <position position="266"/>
    </location>
    <ligand>
        <name>ATP</name>
        <dbReference type="ChEBI" id="CHEBI:30616"/>
        <note>ligand shared between two neighboring subunits</note>
    </ligand>
</feature>
<feature type="binding site" description="in other chain" evidence="1">
    <location>
        <position position="270"/>
    </location>
    <ligand>
        <name>L-methionine</name>
        <dbReference type="ChEBI" id="CHEBI:57844"/>
        <note>ligand shared between two neighboring subunits</note>
    </ligand>
</feature>
<proteinExistence type="inferred from homology"/>
<accession>B1JNQ2</accession>
<dbReference type="EC" id="2.5.1.6" evidence="1"/>
<dbReference type="EMBL" id="CP000950">
    <property type="protein sequence ID" value="ACA67144.1"/>
    <property type="molecule type" value="Genomic_DNA"/>
</dbReference>
<dbReference type="RefSeq" id="WP_002209971.1">
    <property type="nucleotide sequence ID" value="NZ_CP009792.1"/>
</dbReference>
<dbReference type="SMR" id="B1JNQ2"/>
<dbReference type="GeneID" id="57973710"/>
<dbReference type="KEGG" id="ypy:YPK_0843"/>
<dbReference type="PATRIC" id="fig|502800.11.peg.1468"/>
<dbReference type="UniPathway" id="UPA00315">
    <property type="reaction ID" value="UER00080"/>
</dbReference>
<dbReference type="GO" id="GO:0005737">
    <property type="term" value="C:cytoplasm"/>
    <property type="evidence" value="ECO:0007669"/>
    <property type="project" value="UniProtKB-SubCell"/>
</dbReference>
<dbReference type="GO" id="GO:0005524">
    <property type="term" value="F:ATP binding"/>
    <property type="evidence" value="ECO:0007669"/>
    <property type="project" value="UniProtKB-UniRule"/>
</dbReference>
<dbReference type="GO" id="GO:0000287">
    <property type="term" value="F:magnesium ion binding"/>
    <property type="evidence" value="ECO:0007669"/>
    <property type="project" value="UniProtKB-UniRule"/>
</dbReference>
<dbReference type="GO" id="GO:0004478">
    <property type="term" value="F:methionine adenosyltransferase activity"/>
    <property type="evidence" value="ECO:0007669"/>
    <property type="project" value="UniProtKB-UniRule"/>
</dbReference>
<dbReference type="GO" id="GO:0006730">
    <property type="term" value="P:one-carbon metabolic process"/>
    <property type="evidence" value="ECO:0007669"/>
    <property type="project" value="UniProtKB-KW"/>
</dbReference>
<dbReference type="GO" id="GO:0006556">
    <property type="term" value="P:S-adenosylmethionine biosynthetic process"/>
    <property type="evidence" value="ECO:0007669"/>
    <property type="project" value="UniProtKB-UniRule"/>
</dbReference>
<dbReference type="CDD" id="cd18079">
    <property type="entry name" value="S-AdoMet_synt"/>
    <property type="match status" value="1"/>
</dbReference>
<dbReference type="FunFam" id="3.30.300.10:FF:000001">
    <property type="entry name" value="S-adenosylmethionine synthase"/>
    <property type="match status" value="1"/>
</dbReference>
<dbReference type="FunFam" id="3.30.300.10:FF:000003">
    <property type="entry name" value="S-adenosylmethionine synthase"/>
    <property type="match status" value="1"/>
</dbReference>
<dbReference type="Gene3D" id="3.30.300.10">
    <property type="match status" value="3"/>
</dbReference>
<dbReference type="HAMAP" id="MF_00086">
    <property type="entry name" value="S_AdoMet_synth1"/>
    <property type="match status" value="1"/>
</dbReference>
<dbReference type="InterPro" id="IPR022631">
    <property type="entry name" value="ADOMET_SYNTHASE_CS"/>
</dbReference>
<dbReference type="InterPro" id="IPR022630">
    <property type="entry name" value="S-AdoMet_synt_C"/>
</dbReference>
<dbReference type="InterPro" id="IPR022629">
    <property type="entry name" value="S-AdoMet_synt_central"/>
</dbReference>
<dbReference type="InterPro" id="IPR022628">
    <property type="entry name" value="S-AdoMet_synt_N"/>
</dbReference>
<dbReference type="InterPro" id="IPR002133">
    <property type="entry name" value="S-AdoMet_synthetase"/>
</dbReference>
<dbReference type="InterPro" id="IPR022636">
    <property type="entry name" value="S-AdoMet_synthetase_sfam"/>
</dbReference>
<dbReference type="NCBIfam" id="TIGR01034">
    <property type="entry name" value="metK"/>
    <property type="match status" value="1"/>
</dbReference>
<dbReference type="PANTHER" id="PTHR11964">
    <property type="entry name" value="S-ADENOSYLMETHIONINE SYNTHETASE"/>
    <property type="match status" value="1"/>
</dbReference>
<dbReference type="Pfam" id="PF02773">
    <property type="entry name" value="S-AdoMet_synt_C"/>
    <property type="match status" value="1"/>
</dbReference>
<dbReference type="Pfam" id="PF02772">
    <property type="entry name" value="S-AdoMet_synt_M"/>
    <property type="match status" value="1"/>
</dbReference>
<dbReference type="Pfam" id="PF00438">
    <property type="entry name" value="S-AdoMet_synt_N"/>
    <property type="match status" value="1"/>
</dbReference>
<dbReference type="PIRSF" id="PIRSF000497">
    <property type="entry name" value="MAT"/>
    <property type="match status" value="1"/>
</dbReference>
<dbReference type="SUPFAM" id="SSF55973">
    <property type="entry name" value="S-adenosylmethionine synthetase"/>
    <property type="match status" value="3"/>
</dbReference>
<dbReference type="PROSITE" id="PS00376">
    <property type="entry name" value="ADOMET_SYNTHASE_1"/>
    <property type="match status" value="1"/>
</dbReference>
<dbReference type="PROSITE" id="PS00377">
    <property type="entry name" value="ADOMET_SYNTHASE_2"/>
    <property type="match status" value="1"/>
</dbReference>
<sequence>MAKHLFTSESVSEGHPDKIADQISDAVLDAILEQDPKARVACETYVKTGMVLVGGEVTTNAWVDIEEITRRTIREIGYVHSDMGFDANSCAVLSAIGKQSPDINQGVDRENPLEQGAGDQGLMFGYATNETSVLMPAPITYAHRLVERQAEVRKNGALPWLRPDAKSQVTFQYDDGKIVGIDAVVLSTQHSEDINQKDLHEAVMEEIIKPVLPAEWITAHTKYFINPTGRFVIGGPMGDCGLTGRKIIVDTYGGMARHGGGAFSGKDPSKVDRSAAYAARYVAKNIVAAGLADRCEIQVSYAIGVAEPTSIMVEAFGTEKIPADQLTLLVREFFDLRPYGLIKMLDLLHPIYRETAAYGHFGREHFPWEKTDKAALLRDAAGLK</sequence>